<organism>
    <name type="scientific">Mycolicibacterium paratuberculosis (strain ATCC BAA-968 / K-10)</name>
    <name type="common">Mycobacterium paratuberculosis</name>
    <dbReference type="NCBI Taxonomy" id="262316"/>
    <lineage>
        <taxon>Bacteria</taxon>
        <taxon>Bacillati</taxon>
        <taxon>Actinomycetota</taxon>
        <taxon>Actinomycetes</taxon>
        <taxon>Mycobacteriales</taxon>
        <taxon>Mycobacteriaceae</taxon>
        <taxon>Mycobacterium</taxon>
        <taxon>Mycobacterium avium complex (MAC)</taxon>
    </lineage>
</organism>
<evidence type="ECO:0000255" key="1">
    <source>
        <dbReference type="HAMAP-Rule" id="MF_01080"/>
    </source>
</evidence>
<feature type="chain" id="PRO_0000121868" description="tRNA pseudouridine synthase B">
    <location>
        <begin position="1"/>
        <end position="293"/>
    </location>
</feature>
<feature type="active site" description="Nucleophile" evidence="1">
    <location>
        <position position="40"/>
    </location>
</feature>
<gene>
    <name evidence="1" type="primary">truB</name>
    <name type="ordered locus">MAP_2898c</name>
</gene>
<comment type="function">
    <text evidence="1">Responsible for synthesis of pseudouridine from uracil-55 in the psi GC loop of transfer RNAs.</text>
</comment>
<comment type="catalytic activity">
    <reaction evidence="1">
        <text>uridine(55) in tRNA = pseudouridine(55) in tRNA</text>
        <dbReference type="Rhea" id="RHEA:42532"/>
        <dbReference type="Rhea" id="RHEA-COMP:10101"/>
        <dbReference type="Rhea" id="RHEA-COMP:10102"/>
        <dbReference type="ChEBI" id="CHEBI:65314"/>
        <dbReference type="ChEBI" id="CHEBI:65315"/>
        <dbReference type="EC" id="5.4.99.25"/>
    </reaction>
</comment>
<comment type="similarity">
    <text evidence="1">Belongs to the pseudouridine synthase TruB family. Type 1 subfamily.</text>
</comment>
<name>TRUB_MYCPA</name>
<keyword id="KW-0413">Isomerase</keyword>
<keyword id="KW-1185">Reference proteome</keyword>
<keyword id="KW-0819">tRNA processing</keyword>
<sequence length="293" mass="30590">MSPPGLVVVDKPAGMTSHDVVGRCRRIFATRRVGHAGTLDPMATGVLVLGVERATKILGLLTAAAKSYSATIRLGQATSTDDAEGDVARSVDARHLTSQAIEAAVGGLRGDIHQVPSTVSAIKVAGKRAYKLVREGQAVELPARPVRIDRFEVRGLRAAGACVDVDVEVDCSSGTYVRALARDLGAALGVGGHLTALRRTRVGRFGLEQAYGLDELAECPRLSYSLDEACLLIFGRRDLSADEAEAAGNGRALAAAGIDGVYAACAPDGRVIALLRDEGARTKSVVVLRPATL</sequence>
<accession>Q73VW3</accession>
<reference key="1">
    <citation type="journal article" date="2005" name="Proc. Natl. Acad. Sci. U.S.A.">
        <title>The complete genome sequence of Mycobacterium avium subspecies paratuberculosis.</title>
        <authorList>
            <person name="Li L."/>
            <person name="Bannantine J.P."/>
            <person name="Zhang Q."/>
            <person name="Amonsin A."/>
            <person name="May B.J."/>
            <person name="Alt D."/>
            <person name="Banerji N."/>
            <person name="Kanjilal S."/>
            <person name="Kapur V."/>
        </authorList>
    </citation>
    <scope>NUCLEOTIDE SEQUENCE [LARGE SCALE GENOMIC DNA]</scope>
    <source>
        <strain>ATCC BAA-968 / K-10</strain>
    </source>
</reference>
<dbReference type="EC" id="5.4.99.25" evidence="1"/>
<dbReference type="EMBL" id="AE016958">
    <property type="protein sequence ID" value="AAS05215.1"/>
    <property type="molecule type" value="Genomic_DNA"/>
</dbReference>
<dbReference type="RefSeq" id="WP_010949770.1">
    <property type="nucleotide sequence ID" value="NZ_CP106873.1"/>
</dbReference>
<dbReference type="SMR" id="Q73VW3"/>
<dbReference type="STRING" id="262316.MAP_2898c"/>
<dbReference type="KEGG" id="mpa:MAP_2898c"/>
<dbReference type="PATRIC" id="fig|262316.17.peg.3071"/>
<dbReference type="eggNOG" id="COG0130">
    <property type="taxonomic scope" value="Bacteria"/>
</dbReference>
<dbReference type="HOGENOM" id="CLU_032087_0_0_11"/>
<dbReference type="Proteomes" id="UP000000580">
    <property type="component" value="Chromosome"/>
</dbReference>
<dbReference type="GO" id="GO:0003723">
    <property type="term" value="F:RNA binding"/>
    <property type="evidence" value="ECO:0007669"/>
    <property type="project" value="InterPro"/>
</dbReference>
<dbReference type="GO" id="GO:0160148">
    <property type="term" value="F:tRNA pseudouridine(55) synthase activity"/>
    <property type="evidence" value="ECO:0007669"/>
    <property type="project" value="UniProtKB-EC"/>
</dbReference>
<dbReference type="GO" id="GO:1990481">
    <property type="term" value="P:mRNA pseudouridine synthesis"/>
    <property type="evidence" value="ECO:0007669"/>
    <property type="project" value="TreeGrafter"/>
</dbReference>
<dbReference type="GO" id="GO:0031119">
    <property type="term" value="P:tRNA pseudouridine synthesis"/>
    <property type="evidence" value="ECO:0007669"/>
    <property type="project" value="UniProtKB-UniRule"/>
</dbReference>
<dbReference type="CDD" id="cd02573">
    <property type="entry name" value="PseudoU_synth_EcTruB"/>
    <property type="match status" value="1"/>
</dbReference>
<dbReference type="FunFam" id="3.30.2350.10:FF:000011">
    <property type="entry name" value="tRNA pseudouridine synthase B"/>
    <property type="match status" value="1"/>
</dbReference>
<dbReference type="Gene3D" id="3.30.2350.10">
    <property type="entry name" value="Pseudouridine synthase"/>
    <property type="match status" value="1"/>
</dbReference>
<dbReference type="Gene3D" id="2.30.130.10">
    <property type="entry name" value="PUA domain"/>
    <property type="match status" value="1"/>
</dbReference>
<dbReference type="HAMAP" id="MF_01080">
    <property type="entry name" value="TruB_bact"/>
    <property type="match status" value="1"/>
</dbReference>
<dbReference type="InterPro" id="IPR020103">
    <property type="entry name" value="PsdUridine_synth_cat_dom_sf"/>
</dbReference>
<dbReference type="InterPro" id="IPR002501">
    <property type="entry name" value="PsdUridine_synth_N"/>
</dbReference>
<dbReference type="InterPro" id="IPR015947">
    <property type="entry name" value="PUA-like_sf"/>
</dbReference>
<dbReference type="InterPro" id="IPR036974">
    <property type="entry name" value="PUA_sf"/>
</dbReference>
<dbReference type="InterPro" id="IPR015225">
    <property type="entry name" value="tRNA_psdUridine_synth_fam2_C"/>
</dbReference>
<dbReference type="InterPro" id="IPR014780">
    <property type="entry name" value="tRNA_psdUridine_synth_TruB"/>
</dbReference>
<dbReference type="InterPro" id="IPR032819">
    <property type="entry name" value="TruB_C"/>
</dbReference>
<dbReference type="NCBIfam" id="TIGR00431">
    <property type="entry name" value="TruB"/>
    <property type="match status" value="1"/>
</dbReference>
<dbReference type="PANTHER" id="PTHR13767:SF2">
    <property type="entry name" value="PSEUDOURIDYLATE SYNTHASE TRUB1"/>
    <property type="match status" value="1"/>
</dbReference>
<dbReference type="PANTHER" id="PTHR13767">
    <property type="entry name" value="TRNA-PSEUDOURIDINE SYNTHASE"/>
    <property type="match status" value="1"/>
</dbReference>
<dbReference type="Pfam" id="PF09142">
    <property type="entry name" value="TruB_C"/>
    <property type="match status" value="1"/>
</dbReference>
<dbReference type="Pfam" id="PF16198">
    <property type="entry name" value="TruB_C_2"/>
    <property type="match status" value="1"/>
</dbReference>
<dbReference type="Pfam" id="PF01509">
    <property type="entry name" value="TruB_N"/>
    <property type="match status" value="1"/>
</dbReference>
<dbReference type="SUPFAM" id="SSF55120">
    <property type="entry name" value="Pseudouridine synthase"/>
    <property type="match status" value="1"/>
</dbReference>
<dbReference type="SUPFAM" id="SSF88697">
    <property type="entry name" value="PUA domain-like"/>
    <property type="match status" value="1"/>
</dbReference>
<protein>
    <recommendedName>
        <fullName evidence="1">tRNA pseudouridine synthase B</fullName>
        <ecNumber evidence="1">5.4.99.25</ecNumber>
    </recommendedName>
    <alternativeName>
        <fullName evidence="1">tRNA pseudouridine(55) synthase</fullName>
        <shortName evidence="1">Psi55 synthase</shortName>
    </alternativeName>
    <alternativeName>
        <fullName evidence="1">tRNA pseudouridylate synthase</fullName>
    </alternativeName>
    <alternativeName>
        <fullName evidence="1">tRNA-uridine isomerase</fullName>
    </alternativeName>
</protein>
<proteinExistence type="inferred from homology"/>